<reference key="1">
    <citation type="journal article" date="2002" name="Nucleic Acids Res.">
        <title>Genome sequence of Shigella flexneri 2a: insights into pathogenicity through comparison with genomes of Escherichia coli K12 and O157.</title>
        <authorList>
            <person name="Jin Q."/>
            <person name="Yuan Z."/>
            <person name="Xu J."/>
            <person name="Wang Y."/>
            <person name="Shen Y."/>
            <person name="Lu W."/>
            <person name="Wang J."/>
            <person name="Liu H."/>
            <person name="Yang J."/>
            <person name="Yang F."/>
            <person name="Zhang X."/>
            <person name="Zhang J."/>
            <person name="Yang G."/>
            <person name="Wu H."/>
            <person name="Qu D."/>
            <person name="Dong J."/>
            <person name="Sun L."/>
            <person name="Xue Y."/>
            <person name="Zhao A."/>
            <person name="Gao Y."/>
            <person name="Zhu J."/>
            <person name="Kan B."/>
            <person name="Ding K."/>
            <person name="Chen S."/>
            <person name="Cheng H."/>
            <person name="Yao Z."/>
            <person name="He B."/>
            <person name="Chen R."/>
            <person name="Ma D."/>
            <person name="Qiang B."/>
            <person name="Wen Y."/>
            <person name="Hou Y."/>
            <person name="Yu J."/>
        </authorList>
    </citation>
    <scope>NUCLEOTIDE SEQUENCE [LARGE SCALE GENOMIC DNA]</scope>
    <source>
        <strain>301 / Serotype 2a</strain>
    </source>
</reference>
<reference key="2">
    <citation type="journal article" date="2003" name="Infect. Immun.">
        <title>Complete genome sequence and comparative genomics of Shigella flexneri serotype 2a strain 2457T.</title>
        <authorList>
            <person name="Wei J."/>
            <person name="Goldberg M.B."/>
            <person name="Burland V."/>
            <person name="Venkatesan M.M."/>
            <person name="Deng W."/>
            <person name="Fournier G."/>
            <person name="Mayhew G.F."/>
            <person name="Plunkett G. III"/>
            <person name="Rose D.J."/>
            <person name="Darling A."/>
            <person name="Mau B."/>
            <person name="Perna N.T."/>
            <person name="Payne S.M."/>
            <person name="Runyen-Janecky L.J."/>
            <person name="Zhou S."/>
            <person name="Schwartz D.C."/>
            <person name="Blattner F.R."/>
        </authorList>
    </citation>
    <scope>NUCLEOTIDE SEQUENCE [LARGE SCALE GENOMIC DNA]</scope>
    <source>
        <strain>ATCC 700930 / 2457T / Serotype 2a</strain>
    </source>
</reference>
<feature type="initiator methionine" description="Removed" evidence="1">
    <location>
        <position position="1"/>
    </location>
</feature>
<feature type="chain" id="PRO_0000124338" description="Small ribosomal subunit protein uS7">
    <location>
        <begin position="2"/>
        <end position="156"/>
    </location>
</feature>
<evidence type="ECO:0000250" key="1"/>
<evidence type="ECO:0000255" key="2">
    <source>
        <dbReference type="HAMAP-Rule" id="MF_00480"/>
    </source>
</evidence>
<evidence type="ECO:0000305" key="3"/>
<accession>P66608</accession>
<accession>Q8X887</accession>
<proteinExistence type="inferred from homology"/>
<dbReference type="EMBL" id="AE005674">
    <property type="protein sequence ID" value="AAN44822.1"/>
    <property type="molecule type" value="Genomic_DNA"/>
</dbReference>
<dbReference type="EMBL" id="AE014073">
    <property type="protein sequence ID" value="AAP19355.1"/>
    <property type="molecule type" value="Genomic_DNA"/>
</dbReference>
<dbReference type="RefSeq" id="NP_709115.1">
    <property type="nucleotide sequence ID" value="NC_004337.2"/>
</dbReference>
<dbReference type="RefSeq" id="WP_001138043.1">
    <property type="nucleotide sequence ID" value="NZ_WPGW01000003.1"/>
</dbReference>
<dbReference type="SMR" id="P66608"/>
<dbReference type="STRING" id="198214.SF3359"/>
<dbReference type="PaxDb" id="198214-SF3359"/>
<dbReference type="GeneID" id="1026996"/>
<dbReference type="GeneID" id="93778657"/>
<dbReference type="KEGG" id="sfl:SF3359"/>
<dbReference type="KEGG" id="sfx:S4403"/>
<dbReference type="PATRIC" id="fig|198214.7.peg.3969"/>
<dbReference type="HOGENOM" id="CLU_072226_1_1_6"/>
<dbReference type="Proteomes" id="UP000001006">
    <property type="component" value="Chromosome"/>
</dbReference>
<dbReference type="Proteomes" id="UP000002673">
    <property type="component" value="Chromosome"/>
</dbReference>
<dbReference type="GO" id="GO:0015935">
    <property type="term" value="C:small ribosomal subunit"/>
    <property type="evidence" value="ECO:0007669"/>
    <property type="project" value="InterPro"/>
</dbReference>
<dbReference type="GO" id="GO:0019843">
    <property type="term" value="F:rRNA binding"/>
    <property type="evidence" value="ECO:0007669"/>
    <property type="project" value="UniProtKB-UniRule"/>
</dbReference>
<dbReference type="GO" id="GO:0003735">
    <property type="term" value="F:structural constituent of ribosome"/>
    <property type="evidence" value="ECO:0007669"/>
    <property type="project" value="InterPro"/>
</dbReference>
<dbReference type="GO" id="GO:0000049">
    <property type="term" value="F:tRNA binding"/>
    <property type="evidence" value="ECO:0007669"/>
    <property type="project" value="UniProtKB-UniRule"/>
</dbReference>
<dbReference type="GO" id="GO:0006412">
    <property type="term" value="P:translation"/>
    <property type="evidence" value="ECO:0007669"/>
    <property type="project" value="UniProtKB-UniRule"/>
</dbReference>
<dbReference type="CDD" id="cd14869">
    <property type="entry name" value="uS7_Bacteria"/>
    <property type="match status" value="1"/>
</dbReference>
<dbReference type="FunFam" id="1.10.455.10:FF:000001">
    <property type="entry name" value="30S ribosomal protein S7"/>
    <property type="match status" value="1"/>
</dbReference>
<dbReference type="Gene3D" id="1.10.455.10">
    <property type="entry name" value="Ribosomal protein S7 domain"/>
    <property type="match status" value="1"/>
</dbReference>
<dbReference type="HAMAP" id="MF_00480_B">
    <property type="entry name" value="Ribosomal_uS7_B"/>
    <property type="match status" value="1"/>
</dbReference>
<dbReference type="InterPro" id="IPR000235">
    <property type="entry name" value="Ribosomal_uS7"/>
</dbReference>
<dbReference type="InterPro" id="IPR005717">
    <property type="entry name" value="Ribosomal_uS7_bac/org-type"/>
</dbReference>
<dbReference type="InterPro" id="IPR020606">
    <property type="entry name" value="Ribosomal_uS7_CS"/>
</dbReference>
<dbReference type="InterPro" id="IPR023798">
    <property type="entry name" value="Ribosomal_uS7_dom"/>
</dbReference>
<dbReference type="InterPro" id="IPR036823">
    <property type="entry name" value="Ribosomal_uS7_dom_sf"/>
</dbReference>
<dbReference type="NCBIfam" id="TIGR01029">
    <property type="entry name" value="rpsG_bact"/>
    <property type="match status" value="1"/>
</dbReference>
<dbReference type="PANTHER" id="PTHR11205">
    <property type="entry name" value="RIBOSOMAL PROTEIN S7"/>
    <property type="match status" value="1"/>
</dbReference>
<dbReference type="Pfam" id="PF00177">
    <property type="entry name" value="Ribosomal_S7"/>
    <property type="match status" value="1"/>
</dbReference>
<dbReference type="PIRSF" id="PIRSF002122">
    <property type="entry name" value="RPS7p_RPS7a_RPS5e_RPS7o"/>
    <property type="match status" value="1"/>
</dbReference>
<dbReference type="SUPFAM" id="SSF47973">
    <property type="entry name" value="Ribosomal protein S7"/>
    <property type="match status" value="1"/>
</dbReference>
<dbReference type="PROSITE" id="PS00052">
    <property type="entry name" value="RIBOSOMAL_S7"/>
    <property type="match status" value="1"/>
</dbReference>
<protein>
    <recommendedName>
        <fullName evidence="2">Small ribosomal subunit protein uS7</fullName>
    </recommendedName>
    <alternativeName>
        <fullName evidence="3">30S ribosomal protein S7</fullName>
    </alternativeName>
</protein>
<name>RS7_SHIFL</name>
<comment type="function">
    <text evidence="2">One of the primary rRNA binding proteins, it binds directly to 16S rRNA where it nucleates assembly of the head domain of the 30S subunit. Is located at the subunit interface close to the decoding center, probably blocks exit of the E-site tRNA.</text>
</comment>
<comment type="subunit">
    <text evidence="2">Part of the 30S ribosomal subunit. Contacts proteins S9 and S11.</text>
</comment>
<comment type="similarity">
    <text evidence="2">Belongs to the universal ribosomal protein uS7 family.</text>
</comment>
<sequence length="156" mass="17604">MPRRRVIGQRKILPDPKFGSELLAKFVNILMVDGKKSTAESIVYSALETLAQRSGKSELEAFEVALENVRPTVEVKSRRVGGSTYQVPVEVRPVRRNALAMRWIVEAARKRGDKSMALRLANELSDAAENKGTAVKKREDVHRMAEANKAFAHYRW</sequence>
<gene>
    <name evidence="2" type="primary">rpsG</name>
    <name type="ordered locus">SF3359</name>
    <name type="ordered locus">S4403</name>
</gene>
<organism>
    <name type="scientific">Shigella flexneri</name>
    <dbReference type="NCBI Taxonomy" id="623"/>
    <lineage>
        <taxon>Bacteria</taxon>
        <taxon>Pseudomonadati</taxon>
        <taxon>Pseudomonadota</taxon>
        <taxon>Gammaproteobacteria</taxon>
        <taxon>Enterobacterales</taxon>
        <taxon>Enterobacteriaceae</taxon>
        <taxon>Shigella</taxon>
    </lineage>
</organism>
<keyword id="KW-1185">Reference proteome</keyword>
<keyword id="KW-0687">Ribonucleoprotein</keyword>
<keyword id="KW-0689">Ribosomal protein</keyword>
<keyword id="KW-0694">RNA-binding</keyword>
<keyword id="KW-0699">rRNA-binding</keyword>